<feature type="chain" id="PRO_0000116112" description="DNA primase">
    <location>
        <begin position="1"/>
        <end position="1083"/>
    </location>
</feature>
<feature type="zinc finger region" description="CHC2-type" evidence="1">
    <location>
        <begin position="1022"/>
        <end position="1061"/>
    </location>
</feature>
<feature type="site" description="Essential for primase activity" evidence="1">
    <location>
        <position position="669"/>
    </location>
</feature>
<feature type="site" description="Essential for primase activity" evidence="1">
    <location>
        <position position="671"/>
    </location>
</feature>
<accession>P09270</accession>
<protein>
    <recommendedName>
        <fullName evidence="1">DNA primase</fullName>
        <ecNumber evidence="1">2.7.7.-</ecNumber>
    </recommendedName>
</protein>
<sequence>MDKSSKPTIRLLFATKGCAISHSLLLLTGQISTEPLYVVSYTWTPDLDDVFVKNGREEITQVIPTKRPREVTENDEENQIMHLFCSRDVNVIFYLIGGFSTGDVRSRVWPIFFCCFKTQTDFKALYKALWYGAPLNPHIISDTLCISETFDIHSEVIQTLMVTTHHLNRKGLSDNGLCITEATLCKLVKKSVGRQELTSLYAHYERQVLAAYRRLYWGYGCSPFWYIVRFGPSEKTLVLATRYYLLQTDTSYNTLETPLYDLQAIKDLFLTYQVPALPNCSGYNISDLLSFDKLSMFCCSSTYTRGLTAKNALSYILQRIHTDTTEIHAVSEYITNDRKGLKVPDREFVDYIYLAHFECFNRKQIADHLQAVTYSDFVNKPVLLKSSNLGKRATANFFNHVRSRLNMRDYIKKNVICDVTELGPEIGHKYTITKTYTLSLTYAAKPSKFIGVCDLATTLTRRVENIEKQFSPYGWSSTIPSNPPGFDELSNFEDSGVSAEALRAANFANDTPNQSGRTGFDTSPGITKLLLFFSAATGIATHDVSILSYKTPLEALIGHSEVTGPMPVYRVALPHGAQAFAVIANDTWSSITNRYTLPHEARLIAEDLKQINPCNFVAASLRDMQLTLLLSTSVKNVSKISSNIPKDQLYINRNELFNTNLIITNLILDVDFHIRKPIPLGILHAGMRAFRHGILTAMQLLFPKAVVNPNKDPCYFYKTACPEPTVEVLDDDNLLDITSHSDIDFYIENGELYTCVEENYTEDVWFFDTQTTSEVHTHADVSNNENLHETLPCNCKEKIGFRVCVPIPNPYALVGSSTLKGFAQILQQAVLLEREFVEYIGPYLRDFSFIDTGVYSHGHSLRLPFFSKVTTTGTAVGQLLPFYVVPEQCIDILAFVTSHRNPANFHFHSRPQSNVPVQFILHNLGGEYAEFFERKVARNKQIFSSPQISLTKALKERGVTCLDAFTLEAFVDSTILESIVEHIAVHFPGRDREYTLTSSKCIAIKRDWVLFQLICGTKGFTCLRYPHRGGRTAPRTFVSLRVDHHNRLCISLAQQCFATKCDSNRMHTIFTLEVPNYPNLTSS</sequence>
<dbReference type="EC" id="2.7.7.-" evidence="1"/>
<dbReference type="EMBL" id="X04370">
    <property type="protein sequence ID" value="CAA27889.1"/>
    <property type="molecule type" value="Genomic_DNA"/>
</dbReference>
<dbReference type="PIR" id="F27212">
    <property type="entry name" value="WZBE6"/>
</dbReference>
<dbReference type="Proteomes" id="UP000002602">
    <property type="component" value="Genome"/>
</dbReference>
<dbReference type="GO" id="GO:0042025">
    <property type="term" value="C:host cell nucleus"/>
    <property type="evidence" value="ECO:0007669"/>
    <property type="project" value="UniProtKB-SubCell"/>
</dbReference>
<dbReference type="GO" id="GO:0003899">
    <property type="term" value="F:DNA-directed RNA polymerase activity"/>
    <property type="evidence" value="ECO:0007669"/>
    <property type="project" value="InterPro"/>
</dbReference>
<dbReference type="GO" id="GO:0008270">
    <property type="term" value="F:zinc ion binding"/>
    <property type="evidence" value="ECO:0007669"/>
    <property type="project" value="UniProtKB-KW"/>
</dbReference>
<dbReference type="GO" id="GO:0039686">
    <property type="term" value="P:bidirectional double-stranded viral DNA replication"/>
    <property type="evidence" value="ECO:0007669"/>
    <property type="project" value="InterPro"/>
</dbReference>
<dbReference type="GO" id="GO:0006260">
    <property type="term" value="P:DNA replication"/>
    <property type="evidence" value="ECO:0007669"/>
    <property type="project" value="UniProtKB-KW"/>
</dbReference>
<dbReference type="HAMAP" id="MF_04011">
    <property type="entry name" value="HSV_PRIM"/>
    <property type="match status" value="1"/>
</dbReference>
<dbReference type="InterPro" id="IPR033685">
    <property type="entry name" value="HSV_PRIM"/>
</dbReference>
<dbReference type="Pfam" id="PF03121">
    <property type="entry name" value="Herpes_UL52"/>
    <property type="match status" value="1"/>
</dbReference>
<proteinExistence type="inferred from homology"/>
<evidence type="ECO:0000255" key="1">
    <source>
        <dbReference type="HAMAP-Rule" id="MF_04011"/>
    </source>
</evidence>
<gene>
    <name type="ORF">ORF6</name>
</gene>
<comment type="function">
    <text evidence="1">Essential component of the helicase/primase complex. Unwinds the DNA at the replication forks and generates single-stranded DNA for both leading and lagging strand synthesis. The primase initiates primer synthesis and thereby produces large amount of short RNA primers on the lagging strand that the polymerase elongates using dNTPs.</text>
</comment>
<comment type="subunit">
    <text evidence="1">Associates with the helicase and the primase-associated factor to form the helicase-primase factor.</text>
</comment>
<comment type="subcellular location">
    <subcellularLocation>
        <location evidence="1">Host nucleus</location>
    </subcellularLocation>
    <text evidence="1">Requires the presence of the primase associated factor to properly localize in the host cell nucleus.</text>
</comment>
<comment type="similarity">
    <text evidence="1">Belongs to the herpesviridae DNA primase family.</text>
</comment>
<organismHost>
    <name type="scientific">Homo sapiens</name>
    <name type="common">Human</name>
    <dbReference type="NCBI Taxonomy" id="9606"/>
</organismHost>
<reference key="1">
    <citation type="journal article" date="1986" name="J. Gen. Virol.">
        <title>The complete DNA sequence of varicella-zoster virus.</title>
        <authorList>
            <person name="Davison A.J."/>
            <person name="Scott J.E."/>
        </authorList>
    </citation>
    <scope>NUCLEOTIDE SEQUENCE [LARGE SCALE GENOMIC DNA]</scope>
</reference>
<organism>
    <name type="scientific">Varicella-zoster virus (strain Dumas)</name>
    <name type="common">HHV-3</name>
    <name type="synonym">Human herpesvirus 3</name>
    <dbReference type="NCBI Taxonomy" id="10338"/>
    <lineage>
        <taxon>Viruses</taxon>
        <taxon>Duplodnaviria</taxon>
        <taxon>Heunggongvirae</taxon>
        <taxon>Peploviricota</taxon>
        <taxon>Herviviricetes</taxon>
        <taxon>Herpesvirales</taxon>
        <taxon>Orthoherpesviridae</taxon>
        <taxon>Alphaherpesvirinae</taxon>
        <taxon>Varicellovirus</taxon>
        <taxon>Varicellovirus humanalpha3</taxon>
        <taxon>Human herpesvirus 3</taxon>
    </lineage>
</organism>
<name>PRIM_VZVD</name>
<keyword id="KW-0235">DNA replication</keyword>
<keyword id="KW-1048">Host nucleus</keyword>
<keyword id="KW-0479">Metal-binding</keyword>
<keyword id="KW-1185">Reference proteome</keyword>
<keyword id="KW-0808">Transferase</keyword>
<keyword id="KW-0862">Zinc</keyword>
<keyword id="KW-0863">Zinc-finger</keyword>